<protein>
    <recommendedName>
        <fullName evidence="1">Na(+)-translocating NADH-quinone reductase subunit D</fullName>
        <shortName evidence="1">Na(+)-NQR subunit D</shortName>
        <shortName evidence="1">Na(+)-translocating NQR subunit D</shortName>
        <ecNumber evidence="1">7.2.1.1</ecNumber>
    </recommendedName>
    <alternativeName>
        <fullName evidence="1">NQR complex subunit D</fullName>
    </alternativeName>
    <alternativeName>
        <fullName evidence="1">NQR-1 subunit D</fullName>
    </alternativeName>
</protein>
<proteinExistence type="inferred from homology"/>
<sequence length="213" mass="23239">MTTNKSYLTYFTDALWINNQPLIAILGICSALAVTTTVTTALTMGFAVSFVTGCSSFVVSLLRKITPESVRMIAQLIIISLFVILIDQFLKAFFFTISKTLSVFVGLIITNCIVMGRAESMARHVSPIPAFLDGLGSGLGYGWVLVCISIIRELFGFGTILGFRVIPEILYASAAHPDGYENLGLMVLAPSAFFLLGIMIWIVNIIRAPKTKR</sequence>
<gene>
    <name evidence="1" type="primary">nqrD</name>
    <name type="ordered locus">CTL0532</name>
</gene>
<accession>B0B7J6</accession>
<feature type="chain" id="PRO_1000191685" description="Na(+)-translocating NADH-quinone reductase subunit D">
    <location>
        <begin position="1"/>
        <end position="213"/>
    </location>
</feature>
<feature type="transmembrane region" description="Helical" evidence="1">
    <location>
        <begin position="22"/>
        <end position="42"/>
    </location>
</feature>
<feature type="transmembrane region" description="Helical" evidence="1">
    <location>
        <begin position="43"/>
        <end position="63"/>
    </location>
</feature>
<feature type="transmembrane region" description="Helical" evidence="1">
    <location>
        <begin position="77"/>
        <end position="97"/>
    </location>
</feature>
<feature type="transmembrane region" description="Helical" evidence="1">
    <location>
        <begin position="101"/>
        <end position="121"/>
    </location>
</feature>
<feature type="transmembrane region" description="Helical" evidence="1">
    <location>
        <begin position="131"/>
        <end position="151"/>
    </location>
</feature>
<feature type="transmembrane region" description="Helical" evidence="1">
    <location>
        <begin position="183"/>
        <end position="203"/>
    </location>
</feature>
<organism>
    <name type="scientific">Chlamydia trachomatis serovar L2 (strain ATCC VR-902B / DSM 19102 / 434/Bu)</name>
    <dbReference type="NCBI Taxonomy" id="471472"/>
    <lineage>
        <taxon>Bacteria</taxon>
        <taxon>Pseudomonadati</taxon>
        <taxon>Chlamydiota</taxon>
        <taxon>Chlamydiia</taxon>
        <taxon>Chlamydiales</taxon>
        <taxon>Chlamydiaceae</taxon>
        <taxon>Chlamydia/Chlamydophila group</taxon>
        <taxon>Chlamydia</taxon>
    </lineage>
</organism>
<evidence type="ECO:0000255" key="1">
    <source>
        <dbReference type="HAMAP-Rule" id="MF_00428"/>
    </source>
</evidence>
<dbReference type="EC" id="7.2.1.1" evidence="1"/>
<dbReference type="EMBL" id="AM884176">
    <property type="protein sequence ID" value="CAP03972.1"/>
    <property type="molecule type" value="Genomic_DNA"/>
</dbReference>
<dbReference type="RefSeq" id="WP_009873695.1">
    <property type="nucleotide sequence ID" value="NC_010287.1"/>
</dbReference>
<dbReference type="RefSeq" id="YP_001654609.1">
    <property type="nucleotide sequence ID" value="NC_010287.1"/>
</dbReference>
<dbReference type="SMR" id="B0B7J6"/>
<dbReference type="KEGG" id="ctb:CTL0532"/>
<dbReference type="PATRIC" id="fig|471472.4.peg.571"/>
<dbReference type="HOGENOM" id="CLU_046659_1_1_0"/>
<dbReference type="Proteomes" id="UP001154402">
    <property type="component" value="Chromosome"/>
</dbReference>
<dbReference type="GO" id="GO:0005886">
    <property type="term" value="C:plasma membrane"/>
    <property type="evidence" value="ECO:0007669"/>
    <property type="project" value="UniProtKB-SubCell"/>
</dbReference>
<dbReference type="GO" id="GO:0016655">
    <property type="term" value="F:oxidoreductase activity, acting on NAD(P)H, quinone or similar compound as acceptor"/>
    <property type="evidence" value="ECO:0007669"/>
    <property type="project" value="UniProtKB-UniRule"/>
</dbReference>
<dbReference type="GO" id="GO:0006814">
    <property type="term" value="P:sodium ion transport"/>
    <property type="evidence" value="ECO:0007669"/>
    <property type="project" value="UniProtKB-UniRule"/>
</dbReference>
<dbReference type="HAMAP" id="MF_00428">
    <property type="entry name" value="NqrD"/>
    <property type="match status" value="1"/>
</dbReference>
<dbReference type="InterPro" id="IPR011292">
    <property type="entry name" value="NqrD"/>
</dbReference>
<dbReference type="InterPro" id="IPR003667">
    <property type="entry name" value="NqrDE/RnfAE"/>
</dbReference>
<dbReference type="NCBIfam" id="TIGR01939">
    <property type="entry name" value="nqrD"/>
    <property type="match status" value="1"/>
</dbReference>
<dbReference type="NCBIfam" id="NF006777">
    <property type="entry name" value="PRK09292.1"/>
    <property type="match status" value="1"/>
</dbReference>
<dbReference type="PANTHER" id="PTHR30586">
    <property type="entry name" value="ELECTRON TRANSPORT COMPLEX PROTEIN RNFE"/>
    <property type="match status" value="1"/>
</dbReference>
<dbReference type="PANTHER" id="PTHR30586:SF1">
    <property type="entry name" value="NA(+)-TRANSLOCATING NADH-QUINONE REDUCTASE SUBUNIT D"/>
    <property type="match status" value="1"/>
</dbReference>
<dbReference type="Pfam" id="PF02508">
    <property type="entry name" value="Rnf-Nqr"/>
    <property type="match status" value="1"/>
</dbReference>
<dbReference type="PIRSF" id="PIRSF006102">
    <property type="entry name" value="NQR_DE"/>
    <property type="match status" value="1"/>
</dbReference>
<reference key="1">
    <citation type="journal article" date="2008" name="Genome Res.">
        <title>Chlamydia trachomatis: genome sequence analysis of lymphogranuloma venereum isolates.</title>
        <authorList>
            <person name="Thomson N.R."/>
            <person name="Holden M.T.G."/>
            <person name="Carder C."/>
            <person name="Lennard N."/>
            <person name="Lockey S.J."/>
            <person name="Marsh P."/>
            <person name="Skipp P."/>
            <person name="O'Connor C.D."/>
            <person name="Goodhead I."/>
            <person name="Norbertzcak H."/>
            <person name="Harris B."/>
            <person name="Ormond D."/>
            <person name="Rance R."/>
            <person name="Quail M.A."/>
            <person name="Parkhill J."/>
            <person name="Stephens R.S."/>
            <person name="Clarke I.N."/>
        </authorList>
    </citation>
    <scope>NUCLEOTIDE SEQUENCE [LARGE SCALE GENOMIC DNA]</scope>
    <source>
        <strain>ATCC VR-902B / DSM 19102 / 434/Bu</strain>
    </source>
</reference>
<comment type="function">
    <text evidence="1">NQR complex catalyzes the reduction of ubiquinone-1 to ubiquinol by two successive reactions, coupled with the transport of Na(+) ions from the cytoplasm to the periplasm. NqrA to NqrE are probably involved in the second step, the conversion of ubisemiquinone to ubiquinol.</text>
</comment>
<comment type="catalytic activity">
    <reaction evidence="1">
        <text>a ubiquinone + n Na(+)(in) + NADH + H(+) = a ubiquinol + n Na(+)(out) + NAD(+)</text>
        <dbReference type="Rhea" id="RHEA:47748"/>
        <dbReference type="Rhea" id="RHEA-COMP:9565"/>
        <dbReference type="Rhea" id="RHEA-COMP:9566"/>
        <dbReference type="ChEBI" id="CHEBI:15378"/>
        <dbReference type="ChEBI" id="CHEBI:16389"/>
        <dbReference type="ChEBI" id="CHEBI:17976"/>
        <dbReference type="ChEBI" id="CHEBI:29101"/>
        <dbReference type="ChEBI" id="CHEBI:57540"/>
        <dbReference type="ChEBI" id="CHEBI:57945"/>
        <dbReference type="EC" id="7.2.1.1"/>
    </reaction>
</comment>
<comment type="subunit">
    <text evidence="1">Composed of six subunits; NqrA, NqrB, NqrC, NqrD, NqrE and NqrF.</text>
</comment>
<comment type="subcellular location">
    <subcellularLocation>
        <location evidence="1">Cell inner membrane</location>
        <topology evidence="1">Multi-pass membrane protein</topology>
    </subcellularLocation>
</comment>
<comment type="similarity">
    <text evidence="1">Belongs to the NqrDE/RnfAE family.</text>
</comment>
<name>NQRD_CHLT2</name>
<keyword id="KW-0997">Cell inner membrane</keyword>
<keyword id="KW-1003">Cell membrane</keyword>
<keyword id="KW-0406">Ion transport</keyword>
<keyword id="KW-0472">Membrane</keyword>
<keyword id="KW-0520">NAD</keyword>
<keyword id="KW-0915">Sodium</keyword>
<keyword id="KW-0739">Sodium transport</keyword>
<keyword id="KW-1278">Translocase</keyword>
<keyword id="KW-0812">Transmembrane</keyword>
<keyword id="KW-1133">Transmembrane helix</keyword>
<keyword id="KW-0813">Transport</keyword>
<keyword id="KW-0830">Ubiquinone</keyword>